<protein>
    <recommendedName>
        <fullName evidence="1">Probable phosphoglycerate mutase GpmB</fullName>
        <ecNumber evidence="1">5.4.2.-</ecNumber>
    </recommendedName>
    <alternativeName>
        <fullName evidence="1">PGAM</fullName>
    </alternativeName>
    <alternativeName>
        <fullName evidence="1">Phosphoglyceromutase</fullName>
    </alternativeName>
</protein>
<gene>
    <name evidence="1" type="primary">gpmB</name>
    <name type="ordered locus">ECP_4781</name>
</gene>
<feature type="chain" id="PRO_1000064123" description="Probable phosphoglycerate mutase GpmB">
    <location>
        <begin position="1"/>
        <end position="215"/>
    </location>
</feature>
<feature type="active site" description="Tele-phosphohistidine intermediate" evidence="1">
    <location>
        <position position="9"/>
    </location>
</feature>
<feature type="active site" description="Proton donor/acceptor" evidence="1">
    <location>
        <position position="82"/>
    </location>
</feature>
<feature type="binding site" evidence="1">
    <location>
        <begin position="8"/>
        <end position="15"/>
    </location>
    <ligand>
        <name>substrate</name>
    </ligand>
</feature>
<feature type="binding site" evidence="1">
    <location>
        <begin position="21"/>
        <end position="22"/>
    </location>
    <ligand>
        <name>substrate</name>
    </ligand>
</feature>
<feature type="binding site" evidence="1">
    <location>
        <position position="58"/>
    </location>
    <ligand>
        <name>substrate</name>
    </ligand>
</feature>
<feature type="binding site" evidence="1">
    <location>
        <position position="60"/>
    </location>
    <ligand>
        <name>substrate</name>
    </ligand>
</feature>
<feature type="binding site" evidence="1">
    <location>
        <begin position="82"/>
        <end position="85"/>
    </location>
    <ligand>
        <name>substrate</name>
    </ligand>
</feature>
<feature type="binding site" evidence="1">
    <location>
        <begin position="104"/>
        <end position="105"/>
    </location>
    <ligand>
        <name>substrate</name>
    </ligand>
</feature>
<feature type="binding site" evidence="1">
    <location>
        <begin position="151"/>
        <end position="152"/>
    </location>
    <ligand>
        <name>substrate</name>
    </ligand>
</feature>
<feature type="site" description="Transition state stabilizer" evidence="1">
    <location>
        <position position="150"/>
    </location>
</feature>
<evidence type="ECO:0000255" key="1">
    <source>
        <dbReference type="HAMAP-Rule" id="MF_01040"/>
    </source>
</evidence>
<comment type="catalytic activity">
    <reaction evidence="1">
        <text>(2R)-2-phosphoglycerate = (2R)-3-phosphoglycerate</text>
        <dbReference type="Rhea" id="RHEA:15901"/>
        <dbReference type="ChEBI" id="CHEBI:58272"/>
        <dbReference type="ChEBI" id="CHEBI:58289"/>
    </reaction>
</comment>
<comment type="pathway">
    <text evidence="1">Carbohydrate degradation; glycolysis; pyruvate from D-glyceraldehyde 3-phosphate: step 3/5.</text>
</comment>
<comment type="similarity">
    <text evidence="1">Belongs to the phosphoglycerate mutase family. GpmB subfamily.</text>
</comment>
<sequence length="215" mass="24015">MLQVYLVRHGETQWNAERRIQGQSDSPLTAKGEQQAMQVATRAKELGITHIISSDLGRTRRTAEIIAQACGCDIIFDSRLRELNMGVLETRNIDSLTEEEENWRRQLVNGTVDGRIPEGESMQELSDRVNAALESCRDLPQGSRPLLVSHGIALGCLVSTILGLPAWAERRLRLRNCSISRVDYQESLWLASGWVVETAGDISHLDAPALDELQR</sequence>
<organism>
    <name type="scientific">Escherichia coli O6:K15:H31 (strain 536 / UPEC)</name>
    <dbReference type="NCBI Taxonomy" id="362663"/>
    <lineage>
        <taxon>Bacteria</taxon>
        <taxon>Pseudomonadati</taxon>
        <taxon>Pseudomonadota</taxon>
        <taxon>Gammaproteobacteria</taxon>
        <taxon>Enterobacterales</taxon>
        <taxon>Enterobacteriaceae</taxon>
        <taxon>Escherichia</taxon>
    </lineage>
</organism>
<proteinExistence type="inferred from homology"/>
<name>GPMB_ECOL5</name>
<reference key="1">
    <citation type="journal article" date="2006" name="Mol. Microbiol.">
        <title>Role of pathogenicity island-associated integrases in the genome plasticity of uropathogenic Escherichia coli strain 536.</title>
        <authorList>
            <person name="Hochhut B."/>
            <person name="Wilde C."/>
            <person name="Balling G."/>
            <person name="Middendorf B."/>
            <person name="Dobrindt U."/>
            <person name="Brzuszkiewicz E."/>
            <person name="Gottschalk G."/>
            <person name="Carniel E."/>
            <person name="Hacker J."/>
        </authorList>
    </citation>
    <scope>NUCLEOTIDE SEQUENCE [LARGE SCALE GENOMIC DNA]</scope>
    <source>
        <strain>536 / UPEC</strain>
    </source>
</reference>
<accession>Q0T8R6</accession>
<keyword id="KW-0324">Glycolysis</keyword>
<keyword id="KW-0413">Isomerase</keyword>
<dbReference type="EC" id="5.4.2.-" evidence="1"/>
<dbReference type="EMBL" id="CP000247">
    <property type="protein sequence ID" value="ABG72663.1"/>
    <property type="molecule type" value="Genomic_DNA"/>
</dbReference>
<dbReference type="RefSeq" id="WP_000942350.1">
    <property type="nucleotide sequence ID" value="NC_008253.1"/>
</dbReference>
<dbReference type="SMR" id="Q0T8R6"/>
<dbReference type="KEGG" id="ecp:ECP_4781"/>
<dbReference type="HOGENOM" id="CLU_033323_9_5_6"/>
<dbReference type="UniPathway" id="UPA00109">
    <property type="reaction ID" value="UER00186"/>
</dbReference>
<dbReference type="Proteomes" id="UP000009182">
    <property type="component" value="Chromosome"/>
</dbReference>
<dbReference type="GO" id="GO:0005737">
    <property type="term" value="C:cytoplasm"/>
    <property type="evidence" value="ECO:0007669"/>
    <property type="project" value="TreeGrafter"/>
</dbReference>
<dbReference type="GO" id="GO:0016791">
    <property type="term" value="F:phosphatase activity"/>
    <property type="evidence" value="ECO:0007669"/>
    <property type="project" value="TreeGrafter"/>
</dbReference>
<dbReference type="GO" id="GO:0004619">
    <property type="term" value="F:phosphoglycerate mutase activity"/>
    <property type="evidence" value="ECO:0007669"/>
    <property type="project" value="UniProtKB-UniRule"/>
</dbReference>
<dbReference type="GO" id="GO:0006096">
    <property type="term" value="P:glycolytic process"/>
    <property type="evidence" value="ECO:0007669"/>
    <property type="project" value="UniProtKB-UniRule"/>
</dbReference>
<dbReference type="CDD" id="cd07067">
    <property type="entry name" value="HP_PGM_like"/>
    <property type="match status" value="1"/>
</dbReference>
<dbReference type="Gene3D" id="3.40.50.1240">
    <property type="entry name" value="Phosphoglycerate mutase-like"/>
    <property type="match status" value="1"/>
</dbReference>
<dbReference type="HAMAP" id="MF_01040">
    <property type="entry name" value="PGAM_GpmB"/>
    <property type="match status" value="1"/>
</dbReference>
<dbReference type="InterPro" id="IPR013078">
    <property type="entry name" value="His_Pase_superF_clade-1"/>
</dbReference>
<dbReference type="InterPro" id="IPR029033">
    <property type="entry name" value="His_PPase_superfam"/>
</dbReference>
<dbReference type="InterPro" id="IPR001345">
    <property type="entry name" value="PG/BPGM_mutase_AS"/>
</dbReference>
<dbReference type="InterPro" id="IPR050275">
    <property type="entry name" value="PGM_Phosphatase"/>
</dbReference>
<dbReference type="InterPro" id="IPR023086">
    <property type="entry name" value="Phosphoglycerate_mutase_GpmB"/>
</dbReference>
<dbReference type="NCBIfam" id="NF002901">
    <property type="entry name" value="PRK03482.1"/>
    <property type="match status" value="1"/>
</dbReference>
<dbReference type="PANTHER" id="PTHR48100">
    <property type="entry name" value="BROAD-SPECIFICITY PHOSPHATASE YOR283W-RELATED"/>
    <property type="match status" value="1"/>
</dbReference>
<dbReference type="PANTHER" id="PTHR48100:SF1">
    <property type="entry name" value="HISTIDINE PHOSPHATASE FAMILY PROTEIN-RELATED"/>
    <property type="match status" value="1"/>
</dbReference>
<dbReference type="Pfam" id="PF00300">
    <property type="entry name" value="His_Phos_1"/>
    <property type="match status" value="1"/>
</dbReference>
<dbReference type="SMART" id="SM00855">
    <property type="entry name" value="PGAM"/>
    <property type="match status" value="1"/>
</dbReference>
<dbReference type="SUPFAM" id="SSF53254">
    <property type="entry name" value="Phosphoglycerate mutase-like"/>
    <property type="match status" value="1"/>
</dbReference>
<dbReference type="PROSITE" id="PS00175">
    <property type="entry name" value="PG_MUTASE"/>
    <property type="match status" value="1"/>
</dbReference>